<comment type="function">
    <text evidence="1">Plays a role in viral cell-to-cell propagation, by facilitating genome transport to neighboring plant cells through plasmosdesmata. May induce the formation of granular vesicles derived from the Endoplasmic reticulum, which align on actin filaments (By similarity).</text>
</comment>
<comment type="subcellular location">
    <subcellularLocation>
        <location evidence="1">Host endoplasmic reticulum membrane</location>
    </subcellularLocation>
</comment>
<comment type="miscellaneous">
    <text>TGBp1, TGBp2 and TGBp3 seem to act together for cell-to-cell propagation. TGBp1 is the main movement protein that physically cross the plasmodesma with the viral genome. TGBp2 and TGBp3 would facilitate TGBp1 function.</text>
</comment>
<comment type="similarity">
    <text evidence="3">Belongs to the Tymovirales TGBp3 protein family.</text>
</comment>
<keyword id="KW-1038">Host endoplasmic reticulum</keyword>
<keyword id="KW-1043">Host membrane</keyword>
<keyword id="KW-0472">Membrane</keyword>
<keyword id="KW-1185">Reference proteome</keyword>
<keyword id="KW-0812">Transmembrane</keyword>
<keyword id="KW-1133">Transmembrane helix</keyword>
<keyword id="KW-0813">Transport</keyword>
<keyword id="KW-0916">Viral movement protein</keyword>
<proteinExistence type="inferred from homology"/>
<feature type="chain" id="PRO_0000401092" description="Movement protein TGBp3">
    <location>
        <begin position="1"/>
        <end position="70"/>
    </location>
</feature>
<feature type="topological domain" description="Lumenal" evidence="2">
    <location>
        <begin position="1"/>
        <end position="4"/>
    </location>
</feature>
<feature type="transmembrane region" description="Helical" evidence="2">
    <location>
        <begin position="5"/>
        <end position="25"/>
    </location>
</feature>
<feature type="topological domain" description="Cytoplasmic" evidence="2">
    <location>
        <begin position="26"/>
        <end position="70"/>
    </location>
</feature>
<sequence length="70" mass="7438">MFPRSGLGLAVAAAVVAYLVLLLAQQLYMSNSSQCTIVITGESVSVVGCVYSEAFIELVKGLKPYYHPLG</sequence>
<dbReference type="EMBL" id="D21829">
    <property type="protein sequence ID" value="BAA04856.1"/>
    <property type="molecule type" value="Genomic_RNA"/>
</dbReference>
<dbReference type="RefSeq" id="NP_604467.1">
    <property type="nucleotide sequence ID" value="NC_003462.2"/>
</dbReference>
<dbReference type="KEGG" id="vg:935272"/>
<dbReference type="Proteomes" id="UP000000678">
    <property type="component" value="Segment"/>
</dbReference>
<dbReference type="GO" id="GO:0044167">
    <property type="term" value="C:host cell endoplasmic reticulum membrane"/>
    <property type="evidence" value="ECO:0007669"/>
    <property type="project" value="UniProtKB-SubCell"/>
</dbReference>
<dbReference type="GO" id="GO:0016020">
    <property type="term" value="C:membrane"/>
    <property type="evidence" value="ECO:0007669"/>
    <property type="project" value="UniProtKB-KW"/>
</dbReference>
<dbReference type="GO" id="GO:0046740">
    <property type="term" value="P:transport of virus in host, cell to cell"/>
    <property type="evidence" value="ECO:0007669"/>
    <property type="project" value="UniProtKB-KW"/>
</dbReference>
<dbReference type="InterPro" id="IPR003411">
    <property type="entry name" value="TGBp3"/>
</dbReference>
<dbReference type="Pfam" id="PF02495">
    <property type="entry name" value="TGBp3"/>
    <property type="match status" value="1"/>
</dbReference>
<protein>
    <recommendedName>
        <fullName>Movement protein TGBp3</fullName>
    </recommendedName>
    <alternativeName>
        <fullName>Triple gene block 3 protein</fullName>
        <shortName>TGBp3</shortName>
    </alternativeName>
</protein>
<name>TGB3_ASPVP</name>
<gene>
    <name type="ORF">ORF4</name>
</gene>
<reference key="1">
    <citation type="journal article" date="1994" name="J. Gen. Virol.">
        <title>Nucleotide sequences of apple stem pitting virus and of the coat protein gene of a similar virus from pear associated with vein yellows disease and their relationship with potex- and carlaviruses.</title>
        <authorList>
            <person name="Jelkmann W."/>
        </authorList>
    </citation>
    <scope>NUCLEOTIDE SEQUENCE [GENOMIC RNA]</scope>
</reference>
<accession>Q64965</accession>
<evidence type="ECO:0000250" key="1"/>
<evidence type="ECO:0000255" key="2"/>
<evidence type="ECO:0000305" key="3"/>
<organismHost>
    <name type="scientific">Crataegus</name>
    <name type="common">hawthorn</name>
    <dbReference type="NCBI Taxonomy" id="23159"/>
</organismHost>
<organismHost>
    <name type="scientific">Malus sieboldii</name>
    <dbReference type="NCBI Taxonomy" id="106566"/>
</organismHost>
<organismHost>
    <name type="scientific">Malus sylvestris</name>
    <name type="common">European crab apple</name>
    <dbReference type="NCBI Taxonomy" id="3752"/>
</organismHost>
<organismHost>
    <name type="scientific">Pyrus communis</name>
    <name type="common">Pear</name>
    <name type="synonym">Pyrus domestica</name>
    <dbReference type="NCBI Taxonomy" id="23211"/>
</organismHost>
<organism>
    <name type="scientific">Apple stem pitting virus (isolate PA66)</name>
    <name type="common">ASPV</name>
    <dbReference type="NCBI Taxonomy" id="651356"/>
    <lineage>
        <taxon>Viruses</taxon>
        <taxon>Riboviria</taxon>
        <taxon>Orthornavirae</taxon>
        <taxon>Kitrinoviricota</taxon>
        <taxon>Alsuviricetes</taxon>
        <taxon>Tymovirales</taxon>
        <taxon>Betaflexiviridae</taxon>
        <taxon>Quinvirinae</taxon>
        <taxon>Foveavirus</taxon>
        <taxon>Foveavirus mali</taxon>
    </lineage>
</organism>